<sequence>MVKVFFVLAVLSSIISYINIDPMKSSFFLIFSLLFSMPVISMSMHIWFSYFICLLFLSGIFVILVYFSSLSKINVVKSYMAVFLLLLSMLYFSPTVLTYSSYLGLSGFYYSIYWFIFCFILVCLLFFMNFSSYFLNFSGALRKV</sequence>
<proteinExistence type="inferred from homology"/>
<organism>
    <name type="scientific">Caenorhabditis elegans</name>
    <dbReference type="NCBI Taxonomy" id="6239"/>
    <lineage>
        <taxon>Eukaryota</taxon>
        <taxon>Metazoa</taxon>
        <taxon>Ecdysozoa</taxon>
        <taxon>Nematoda</taxon>
        <taxon>Chromadorea</taxon>
        <taxon>Rhabditida</taxon>
        <taxon>Rhabditina</taxon>
        <taxon>Rhabditomorpha</taxon>
        <taxon>Rhabditoidea</taxon>
        <taxon>Rhabditidae</taxon>
        <taxon>Peloderinae</taxon>
        <taxon>Caenorhabditis</taxon>
    </lineage>
</organism>
<name>NU6M_CAEEL</name>
<evidence type="ECO:0000250" key="1"/>
<evidence type="ECO:0000255" key="2"/>
<evidence type="ECO:0000269" key="3">
    <source>
    </source>
</evidence>
<evidence type="ECO:0000305" key="4"/>
<evidence type="ECO:0000312" key="5">
    <source>
        <dbReference type="WormBase" id="MTCE.3"/>
    </source>
</evidence>
<comment type="function">
    <text evidence="1">Core subunit of the mitochondrial membrane respiratory chain NADH dehydrogenase (Complex I) that is believed to belong to the minimal assembly required for catalysis. Complex I functions in the transfer of electrons from NADH to the respiratory chain. The immediate electron acceptor for the enzyme is believed to be ubiquinone (By similarity).</text>
</comment>
<comment type="catalytic activity">
    <reaction>
        <text>a ubiquinone + NADH + 5 H(+)(in) = a ubiquinol + NAD(+) + 4 H(+)(out)</text>
        <dbReference type="Rhea" id="RHEA:29091"/>
        <dbReference type="Rhea" id="RHEA-COMP:9565"/>
        <dbReference type="Rhea" id="RHEA-COMP:9566"/>
        <dbReference type="ChEBI" id="CHEBI:15378"/>
        <dbReference type="ChEBI" id="CHEBI:16389"/>
        <dbReference type="ChEBI" id="CHEBI:17976"/>
        <dbReference type="ChEBI" id="CHEBI:57540"/>
        <dbReference type="ChEBI" id="CHEBI:57945"/>
        <dbReference type="EC" id="7.1.1.2"/>
    </reaction>
</comment>
<comment type="subcellular location">
    <subcellularLocation>
        <location evidence="4">Mitochondrion membrane</location>
        <topology evidence="4">Multi-pass membrane protein</topology>
    </subcellularLocation>
</comment>
<comment type="similarity">
    <text evidence="4">Belongs to the complex I subunit 6 family.</text>
</comment>
<feature type="chain" id="PRO_0000118257" description="NADH-ubiquinone oxidoreductase chain 6">
    <location>
        <begin position="1"/>
        <end position="144"/>
    </location>
</feature>
<feature type="transmembrane region" description="Helical" evidence="2">
    <location>
        <begin position="1"/>
        <end position="21"/>
    </location>
</feature>
<feature type="transmembrane region" description="Helical" evidence="2">
    <location>
        <begin position="25"/>
        <end position="45"/>
    </location>
</feature>
<feature type="transmembrane region" description="Helical" evidence="2">
    <location>
        <begin position="46"/>
        <end position="66"/>
    </location>
</feature>
<feature type="transmembrane region" description="Helical" evidence="2">
    <location>
        <begin position="79"/>
        <end position="99"/>
    </location>
</feature>
<feature type="transmembrane region" description="Helical" evidence="2">
    <location>
        <begin position="108"/>
        <end position="128"/>
    </location>
</feature>
<feature type="sequence variant" description="In strain: AB1, AB2, CB4852, CB4853, CB4855, CB4857, CB4858, KR314 and PB306." evidence="3">
    <original>V</original>
    <variation>I</variation>
    <location>
        <position position="39"/>
    </location>
</feature>
<feature type="sequence variant" description="In strain: CB4854." evidence="3">
    <original>A</original>
    <variation>S</variation>
    <location>
        <position position="81"/>
    </location>
</feature>
<feature type="sequence variant" description="In strain: AB1, AB2, CB4852, CB4853, CB4855, CB4857, CB4858, KR314 and PB306." evidence="3">
    <original>L</original>
    <variation>F</variation>
    <location>
        <position position="90"/>
    </location>
</feature>
<geneLocation type="mitochondrion"/>
<accession>P24885</accession>
<keyword id="KW-0249">Electron transport</keyword>
<keyword id="KW-0472">Membrane</keyword>
<keyword id="KW-0496">Mitochondrion</keyword>
<keyword id="KW-0520">NAD</keyword>
<keyword id="KW-1185">Reference proteome</keyword>
<keyword id="KW-0679">Respiratory chain</keyword>
<keyword id="KW-1278">Translocase</keyword>
<keyword id="KW-0812">Transmembrane</keyword>
<keyword id="KW-1133">Transmembrane helix</keyword>
<keyword id="KW-0813">Transport</keyword>
<keyword id="KW-0830">Ubiquinone</keyword>
<protein>
    <recommendedName>
        <fullName>NADH-ubiquinone oxidoreductase chain 6</fullName>
        <ecNumber>7.1.1.2</ecNumber>
    </recommendedName>
    <alternativeName>
        <fullName>NADH dehydrogenase subunit 6</fullName>
    </alternativeName>
</protein>
<reference key="1">
    <citation type="journal article" date="1992" name="Genetics">
        <title>The mitochondrial genomes of two nematodes, Caenorhabditis elegans and Ascaris suum.</title>
        <authorList>
            <person name="Okimoto R."/>
            <person name="Macfarlane J.L."/>
            <person name="Clary D.O."/>
            <person name="Wolstenholme D.R."/>
        </authorList>
    </citation>
    <scope>NUCLEOTIDE SEQUENCE [LARGE SCALE GENOMIC DNA]</scope>
    <source>
        <strain>Bristol N2</strain>
    </source>
</reference>
<reference key="2">
    <citation type="journal article" date="2003" name="Mol. Biol. Evol.">
        <title>Phylogenetics in Caenorhabditis elegans: an analysis of divergence and outcrossing.</title>
        <authorList>
            <person name="Denver D.R."/>
            <person name="Morris K."/>
            <person name="Thomas W.K."/>
        </authorList>
    </citation>
    <scope>NUCLEOTIDE SEQUENCE [GENOMIC DNA] OF 18-144</scope>
    <scope>VARIANTS ILE-39; SER-81 AND PHE-90</scope>
    <source>
        <strain>AB1</strain>
        <strain>AB2</strain>
        <strain>Bristol N2</strain>
        <strain>CB4852</strain>
        <strain>CB4853</strain>
        <strain>CB4854</strain>
        <strain>CB4855</strain>
        <strain>CB4856</strain>
        <strain>CB4857</strain>
        <strain>CB4858</strain>
        <strain>KR314</strain>
        <strain>PB303</strain>
        <strain>PB306</strain>
        <strain>RW7000</strain>
        <strain>TR403</strain>
    </source>
</reference>
<reference key="3">
    <citation type="journal article" date="1990" name="Nucleic Acids Res.">
        <title>Evidence for the frequent use of TTG as the translation initiation codon of mitochondrial protein genes in the nematodes, Ascaris suum and Caenorhabditis elegans.</title>
        <authorList>
            <person name="Okimoto R."/>
            <person name="Macfarlane J.L."/>
            <person name="Wolstenholme D.R."/>
        </authorList>
    </citation>
    <scope>NUCLEOTIDE SEQUENCE [GENOMIC DNA] OF 1-25</scope>
</reference>
<dbReference type="EC" id="7.1.1.2"/>
<dbReference type="EMBL" id="X54252">
    <property type="protein sequence ID" value="CAA38153.1"/>
    <property type="molecule type" value="Genomic_DNA"/>
</dbReference>
<dbReference type="EMBL" id="AY171133">
    <property type="protein sequence ID" value="AAO16385.1"/>
    <property type="molecule type" value="Genomic_DNA"/>
</dbReference>
<dbReference type="EMBL" id="AY171134">
    <property type="protein sequence ID" value="AAO16388.1"/>
    <property type="molecule type" value="Genomic_DNA"/>
</dbReference>
<dbReference type="EMBL" id="AY171135">
    <property type="protein sequence ID" value="AAO16391.1"/>
    <property type="molecule type" value="Genomic_DNA"/>
</dbReference>
<dbReference type="EMBL" id="AY171136">
    <property type="protein sequence ID" value="AAO16394.1"/>
    <property type="molecule type" value="Genomic_DNA"/>
</dbReference>
<dbReference type="EMBL" id="AY171137">
    <property type="protein sequence ID" value="AAO16397.1"/>
    <property type="molecule type" value="Genomic_DNA"/>
</dbReference>
<dbReference type="EMBL" id="AY171138">
    <property type="protein sequence ID" value="AAO16400.1"/>
    <property type="molecule type" value="Genomic_DNA"/>
</dbReference>
<dbReference type="EMBL" id="AY171139">
    <property type="protein sequence ID" value="AAO16403.1"/>
    <property type="molecule type" value="Genomic_DNA"/>
</dbReference>
<dbReference type="EMBL" id="AY171140">
    <property type="protein sequence ID" value="AAO16406.1"/>
    <property type="molecule type" value="Genomic_DNA"/>
</dbReference>
<dbReference type="EMBL" id="AY171141">
    <property type="protein sequence ID" value="AAO16409.1"/>
    <property type="molecule type" value="Genomic_DNA"/>
</dbReference>
<dbReference type="EMBL" id="AY171142">
    <property type="protein sequence ID" value="AAO16412.1"/>
    <property type="molecule type" value="Genomic_DNA"/>
</dbReference>
<dbReference type="EMBL" id="AY171143">
    <property type="protein sequence ID" value="AAO16415.1"/>
    <property type="molecule type" value="Genomic_DNA"/>
</dbReference>
<dbReference type="EMBL" id="AY171144">
    <property type="protein sequence ID" value="AAO16418.1"/>
    <property type="molecule type" value="Genomic_DNA"/>
</dbReference>
<dbReference type="EMBL" id="AY171145">
    <property type="protein sequence ID" value="AAO16421.1"/>
    <property type="molecule type" value="Genomic_DNA"/>
</dbReference>
<dbReference type="EMBL" id="AY171146">
    <property type="protein sequence ID" value="AAO16424.1"/>
    <property type="molecule type" value="Genomic_DNA"/>
</dbReference>
<dbReference type="EMBL" id="AY171147">
    <property type="protein sequence ID" value="AAO16427.1"/>
    <property type="molecule type" value="Genomic_DNA"/>
</dbReference>
<dbReference type="PIR" id="S26026">
    <property type="entry name" value="S26026"/>
</dbReference>
<dbReference type="RefSeq" id="NP_006953.1">
    <property type="nucleotide sequence ID" value="NC_001328.1"/>
</dbReference>
<dbReference type="SMR" id="P24885"/>
<dbReference type="FunCoup" id="P24885">
    <property type="interactions" value="106"/>
</dbReference>
<dbReference type="IntAct" id="P24885">
    <property type="interactions" value="1"/>
</dbReference>
<dbReference type="STRING" id="6239.MTCE.3.1"/>
<dbReference type="PaxDb" id="6239-MTCE.3"/>
<dbReference type="EnsemblMetazoa" id="MTCE.3.1">
    <property type="protein sequence ID" value="MTCE.3.1"/>
    <property type="gene ID" value="WBGene00010957"/>
</dbReference>
<dbReference type="GeneID" id="2565699"/>
<dbReference type="KEGG" id="cel:KEF34_p12"/>
<dbReference type="AGR" id="WB:WBGene00010957"/>
<dbReference type="CTD" id="4541"/>
<dbReference type="WormBase" id="MTCE.3">
    <property type="protein sequence ID" value="CE34072"/>
    <property type="gene ID" value="WBGene00010957"/>
    <property type="gene designation" value="nduo-6"/>
</dbReference>
<dbReference type="HOGENOM" id="CLU_1798189_0_0_1"/>
<dbReference type="InParanoid" id="P24885"/>
<dbReference type="OMA" id="IDMDYSK"/>
<dbReference type="PRO" id="PR:P24885"/>
<dbReference type="Proteomes" id="UP000001940">
    <property type="component" value="Mitochondrion"/>
</dbReference>
<dbReference type="Bgee" id="WBGene00010957">
    <property type="expression patterns" value="Expressed in pharyngeal muscle cell (C elegans) and 3 other cell types or tissues"/>
</dbReference>
<dbReference type="GO" id="GO:0031966">
    <property type="term" value="C:mitochondrial membrane"/>
    <property type="evidence" value="ECO:0007669"/>
    <property type="project" value="UniProtKB-SubCell"/>
</dbReference>
<dbReference type="GO" id="GO:0008137">
    <property type="term" value="F:NADH dehydrogenase (ubiquinone) activity"/>
    <property type="evidence" value="ECO:0000303"/>
    <property type="project" value="UniProtKB"/>
</dbReference>
<dbReference type="GO" id="GO:0006120">
    <property type="term" value="P:mitochondrial electron transport, NADH to ubiquinone"/>
    <property type="evidence" value="ECO:0000303"/>
    <property type="project" value="UniProtKB"/>
</dbReference>
<gene>
    <name evidence="5" type="primary">nduo-6</name>
    <name evidence="5" type="synonym">nd6</name>
    <name evidence="5" type="ORF">MTCE.3</name>
</gene>